<reference key="1">
    <citation type="journal article" date="2002" name="J. Bacteriol.">
        <title>Whole-genome comparison of Mycobacterium tuberculosis clinical and laboratory strains.</title>
        <authorList>
            <person name="Fleischmann R.D."/>
            <person name="Alland D."/>
            <person name="Eisen J.A."/>
            <person name="Carpenter L."/>
            <person name="White O."/>
            <person name="Peterson J.D."/>
            <person name="DeBoy R.T."/>
            <person name="Dodson R.J."/>
            <person name="Gwinn M.L."/>
            <person name="Haft D.H."/>
            <person name="Hickey E.K."/>
            <person name="Kolonay J.F."/>
            <person name="Nelson W.C."/>
            <person name="Umayam L.A."/>
            <person name="Ermolaeva M.D."/>
            <person name="Salzberg S.L."/>
            <person name="Delcher A."/>
            <person name="Utterback T.R."/>
            <person name="Weidman J.F."/>
            <person name="Khouri H.M."/>
            <person name="Gill J."/>
            <person name="Mikula A."/>
            <person name="Bishai W."/>
            <person name="Jacobs W.R. Jr."/>
            <person name="Venter J.C."/>
            <person name="Fraser C.M."/>
        </authorList>
    </citation>
    <scope>NUCLEOTIDE SEQUENCE [LARGE SCALE GENOMIC DNA]</scope>
    <source>
        <strain>CDC 1551 / Oshkosh</strain>
    </source>
</reference>
<dbReference type="EC" id="1.14.-.-"/>
<dbReference type="EMBL" id="AE000516">
    <property type="protein sequence ID" value="AAK45704.1"/>
    <property type="molecule type" value="Genomic_DNA"/>
</dbReference>
<dbReference type="PIR" id="H70899">
    <property type="entry name" value="H70899"/>
</dbReference>
<dbReference type="RefSeq" id="WP_003407260.1">
    <property type="nucleotide sequence ID" value="NZ_KK341227.1"/>
</dbReference>
<dbReference type="SMR" id="P9WPN2"/>
<dbReference type="KEGG" id="mtc:MT1439"/>
<dbReference type="PATRIC" id="fig|83331.31.peg.1545"/>
<dbReference type="HOGENOM" id="CLU_001570_5_1_11"/>
<dbReference type="Proteomes" id="UP000001020">
    <property type="component" value="Chromosome"/>
</dbReference>
<dbReference type="GO" id="GO:0020037">
    <property type="term" value="F:heme binding"/>
    <property type="evidence" value="ECO:0007669"/>
    <property type="project" value="InterPro"/>
</dbReference>
<dbReference type="GO" id="GO:0005506">
    <property type="term" value="F:iron ion binding"/>
    <property type="evidence" value="ECO:0007669"/>
    <property type="project" value="InterPro"/>
</dbReference>
<dbReference type="GO" id="GO:0004497">
    <property type="term" value="F:monooxygenase activity"/>
    <property type="evidence" value="ECO:0007669"/>
    <property type="project" value="UniProtKB-KW"/>
</dbReference>
<dbReference type="GO" id="GO:0016705">
    <property type="term" value="F:oxidoreductase activity, acting on paired donors, with incorporation or reduction of molecular oxygen"/>
    <property type="evidence" value="ECO:0007669"/>
    <property type="project" value="InterPro"/>
</dbReference>
<dbReference type="CDD" id="cd20620">
    <property type="entry name" value="CYP132-like"/>
    <property type="match status" value="1"/>
</dbReference>
<dbReference type="Gene3D" id="1.10.630.10">
    <property type="entry name" value="Cytochrome P450"/>
    <property type="match status" value="1"/>
</dbReference>
<dbReference type="InterPro" id="IPR001128">
    <property type="entry name" value="Cyt_P450"/>
</dbReference>
<dbReference type="InterPro" id="IPR017972">
    <property type="entry name" value="Cyt_P450_CS"/>
</dbReference>
<dbReference type="InterPro" id="IPR002401">
    <property type="entry name" value="Cyt_P450_E_grp-I"/>
</dbReference>
<dbReference type="InterPro" id="IPR036396">
    <property type="entry name" value="Cyt_P450_sf"/>
</dbReference>
<dbReference type="InterPro" id="IPR050196">
    <property type="entry name" value="Cytochrome_P450_Monoox"/>
</dbReference>
<dbReference type="PANTHER" id="PTHR24291:SF50">
    <property type="entry name" value="BIFUNCTIONAL ALBAFLAVENONE MONOOXYGENASE_TERPENE SYNTHASE"/>
    <property type="match status" value="1"/>
</dbReference>
<dbReference type="PANTHER" id="PTHR24291">
    <property type="entry name" value="CYTOCHROME P450 FAMILY 4"/>
    <property type="match status" value="1"/>
</dbReference>
<dbReference type="Pfam" id="PF00067">
    <property type="entry name" value="p450"/>
    <property type="match status" value="1"/>
</dbReference>
<dbReference type="PRINTS" id="PR00463">
    <property type="entry name" value="EP450I"/>
</dbReference>
<dbReference type="PRINTS" id="PR00385">
    <property type="entry name" value="P450"/>
</dbReference>
<dbReference type="SUPFAM" id="SSF48264">
    <property type="entry name" value="Cytochrome P450"/>
    <property type="match status" value="1"/>
</dbReference>
<dbReference type="PROSITE" id="PS00086">
    <property type="entry name" value="CYTOCHROME_P450"/>
    <property type="match status" value="1"/>
</dbReference>
<sequence>MATATTQRPLKGPAKRMSTWTMTREAITIGFDAGDGFLGRLRGSDITRFRCAGRRFVSISHPDYVDHVLHEARLKYVKSDEYGPIRATAGLNLLTDEGDSWARHRGALNSTFARRHLRGLVGLMIDPIADVTAALVPGAQFDMHQSMVETTLRVVANALFSQDFGPLVQSMHDLATRGLRRAEKLERLGLWGLMPRTVYDTLIWCIYSGVHLPPPLREMQEITLTLDRAINSVIDRRLAEPTNSADLLNVLLSADGGIWPRQRVRDEALTFMLAGHETTANAMSWFWYLMALNPQARDHMLTELDDVLGMRRPTADDLGKLAWTTACLQESQRYFSSVWIIAREAVDDDIIDGHRIRRGTTVVIPIHHIHHDPRWWPDPDRFDPGRFLRCPTDRPRCAYLPFGGGRRICIGQSFALMEMVLMAAIMSQHFTFDLAPGYHVELEATLTLRPKHGVHVIGRRR</sequence>
<gene>
    <name type="primary">cyp132</name>
    <name type="ordered locus">MT1439</name>
</gene>
<name>CP132_MYCTO</name>
<accession>P9WPN2</accession>
<accession>L0T9I0</accession>
<accession>P77900</accession>
<feature type="chain" id="PRO_0000426922" description="Putative cytochrome P450 132">
    <location>
        <begin position="1"/>
        <end position="461"/>
    </location>
</feature>
<feature type="binding site" description="axial binding residue" evidence="1">
    <location>
        <position position="409"/>
    </location>
    <ligand>
        <name>heme</name>
        <dbReference type="ChEBI" id="CHEBI:30413"/>
    </ligand>
    <ligandPart>
        <name>Fe</name>
        <dbReference type="ChEBI" id="CHEBI:18248"/>
    </ligandPart>
</feature>
<keyword id="KW-0349">Heme</keyword>
<keyword id="KW-0408">Iron</keyword>
<keyword id="KW-0479">Metal-binding</keyword>
<keyword id="KW-0503">Monooxygenase</keyword>
<keyword id="KW-0560">Oxidoreductase</keyword>
<keyword id="KW-1185">Reference proteome</keyword>
<organism>
    <name type="scientific">Mycobacterium tuberculosis (strain CDC 1551 / Oshkosh)</name>
    <dbReference type="NCBI Taxonomy" id="83331"/>
    <lineage>
        <taxon>Bacteria</taxon>
        <taxon>Bacillati</taxon>
        <taxon>Actinomycetota</taxon>
        <taxon>Actinomycetes</taxon>
        <taxon>Mycobacteriales</taxon>
        <taxon>Mycobacteriaceae</taxon>
        <taxon>Mycobacterium</taxon>
        <taxon>Mycobacterium tuberculosis complex</taxon>
    </lineage>
</organism>
<proteinExistence type="inferred from homology"/>
<comment type="cofactor">
    <cofactor evidence="1">
        <name>heme</name>
        <dbReference type="ChEBI" id="CHEBI:30413"/>
    </cofactor>
</comment>
<comment type="similarity">
    <text evidence="2">Belongs to the cytochrome P450 family.</text>
</comment>
<protein>
    <recommendedName>
        <fullName>Putative cytochrome P450 132</fullName>
        <ecNumber>1.14.-.-</ecNumber>
    </recommendedName>
</protein>
<evidence type="ECO:0000250" key="1"/>
<evidence type="ECO:0000305" key="2"/>